<name>TATB_NEIG1</name>
<comment type="function">
    <text evidence="1">Part of the twin-arginine translocation (Tat) system that transports large folded proteins containing a characteristic twin-arginine motif in their signal peptide across membranes. Together with TatC, TatB is part of a receptor directly interacting with Tat signal peptides. TatB may form an oligomeric binding site that transiently accommodates folded Tat precursor proteins before their translocation.</text>
</comment>
<comment type="subunit">
    <text evidence="1">The Tat system comprises two distinct complexes: a TatABC complex, containing multiple copies of TatA, TatB and TatC subunits, and a separate TatA complex, containing only TatA subunits. Substrates initially bind to the TatABC complex, which probably triggers association of the separate TatA complex to form the active translocon.</text>
</comment>
<comment type="subcellular location">
    <subcellularLocation>
        <location evidence="1">Cell inner membrane</location>
        <topology evidence="1">Single-pass membrane protein</topology>
    </subcellularLocation>
</comment>
<comment type="similarity">
    <text evidence="1">Belongs to the TatB family.</text>
</comment>
<organism>
    <name type="scientific">Neisseria gonorrhoeae (strain ATCC 700825 / FA 1090)</name>
    <dbReference type="NCBI Taxonomy" id="242231"/>
    <lineage>
        <taxon>Bacteria</taxon>
        <taxon>Pseudomonadati</taxon>
        <taxon>Pseudomonadota</taxon>
        <taxon>Betaproteobacteria</taxon>
        <taxon>Neisseriales</taxon>
        <taxon>Neisseriaceae</taxon>
        <taxon>Neisseria</taxon>
    </lineage>
</organism>
<proteinExistence type="inferred from homology"/>
<sequence length="228" mass="25219">MFDFGLGELIFVGIIALIVLGPERLPEAARTAGRLIGRLQRFVGSVKQELDTQIELEELRKVKQAFEAAAAQVRDSLKETDTDMQNSLHDISDGLKPWEKLPEQRTPADFGVDENGNPLPDTANTVSDGISDVMPSERSDTSAETLGDDRQTGSTAEPAETDKDRAWREYLTASAAAPVVQAVEVSYIDTAVETPVPHTTSLRKQAINRKRDFRPKHRAKPKLRVRKS</sequence>
<keyword id="KW-0997">Cell inner membrane</keyword>
<keyword id="KW-1003">Cell membrane</keyword>
<keyword id="KW-0472">Membrane</keyword>
<keyword id="KW-0653">Protein transport</keyword>
<keyword id="KW-1185">Reference proteome</keyword>
<keyword id="KW-0811">Translocation</keyword>
<keyword id="KW-0812">Transmembrane</keyword>
<keyword id="KW-1133">Transmembrane helix</keyword>
<keyword id="KW-0813">Transport</keyword>
<evidence type="ECO:0000255" key="1">
    <source>
        <dbReference type="HAMAP-Rule" id="MF_00237"/>
    </source>
</evidence>
<evidence type="ECO:0000256" key="2">
    <source>
        <dbReference type="SAM" id="MobiDB-lite"/>
    </source>
</evidence>
<dbReference type="EMBL" id="AE004969">
    <property type="protein sequence ID" value="AAW88937.1"/>
    <property type="molecule type" value="Genomic_DNA"/>
</dbReference>
<dbReference type="RefSeq" id="WP_003687486.1">
    <property type="nucleotide sequence ID" value="NC_002946.2"/>
</dbReference>
<dbReference type="RefSeq" id="YP_207349.1">
    <property type="nucleotide sequence ID" value="NC_002946.2"/>
</dbReference>
<dbReference type="SMR" id="Q5FA50"/>
<dbReference type="STRING" id="242231.NGO_0182"/>
<dbReference type="GeneID" id="66752444"/>
<dbReference type="KEGG" id="ngo:NGO_0182"/>
<dbReference type="PATRIC" id="fig|242231.10.peg.228"/>
<dbReference type="HOGENOM" id="CLU_086034_1_1_4"/>
<dbReference type="Proteomes" id="UP000000535">
    <property type="component" value="Chromosome"/>
</dbReference>
<dbReference type="GO" id="GO:0033281">
    <property type="term" value="C:TAT protein transport complex"/>
    <property type="evidence" value="ECO:0007669"/>
    <property type="project" value="UniProtKB-UniRule"/>
</dbReference>
<dbReference type="GO" id="GO:0008320">
    <property type="term" value="F:protein transmembrane transporter activity"/>
    <property type="evidence" value="ECO:0007669"/>
    <property type="project" value="UniProtKB-UniRule"/>
</dbReference>
<dbReference type="GO" id="GO:0043953">
    <property type="term" value="P:protein transport by the Tat complex"/>
    <property type="evidence" value="ECO:0007669"/>
    <property type="project" value="UniProtKB-UniRule"/>
</dbReference>
<dbReference type="Gene3D" id="1.20.5.3310">
    <property type="match status" value="1"/>
</dbReference>
<dbReference type="HAMAP" id="MF_00237">
    <property type="entry name" value="TatB"/>
    <property type="match status" value="1"/>
</dbReference>
<dbReference type="InterPro" id="IPR003369">
    <property type="entry name" value="TatA/B/E"/>
</dbReference>
<dbReference type="InterPro" id="IPR018448">
    <property type="entry name" value="TatB"/>
</dbReference>
<dbReference type="NCBIfam" id="TIGR01410">
    <property type="entry name" value="tatB"/>
    <property type="match status" value="1"/>
</dbReference>
<dbReference type="PANTHER" id="PTHR33162">
    <property type="entry name" value="SEC-INDEPENDENT PROTEIN TRANSLOCASE PROTEIN TATA, CHLOROPLASTIC"/>
    <property type="match status" value="1"/>
</dbReference>
<dbReference type="PANTHER" id="PTHR33162:SF1">
    <property type="entry name" value="SEC-INDEPENDENT PROTEIN TRANSLOCASE PROTEIN TATA, CHLOROPLASTIC"/>
    <property type="match status" value="1"/>
</dbReference>
<dbReference type="Pfam" id="PF02416">
    <property type="entry name" value="TatA_B_E"/>
    <property type="match status" value="1"/>
</dbReference>
<dbReference type="PRINTS" id="PR01506">
    <property type="entry name" value="TATBPROTEIN"/>
</dbReference>
<accession>Q5FA50</accession>
<protein>
    <recommendedName>
        <fullName evidence="1">Sec-independent protein translocase protein TatB</fullName>
    </recommendedName>
</protein>
<reference key="1">
    <citation type="submission" date="2003-03" db="EMBL/GenBank/DDBJ databases">
        <title>The complete genome sequence of Neisseria gonorrhoeae.</title>
        <authorList>
            <person name="Lewis L.A."/>
            <person name="Gillaspy A.F."/>
            <person name="McLaughlin R.E."/>
            <person name="Gipson M."/>
            <person name="Ducey T.F."/>
            <person name="Ownbey T."/>
            <person name="Hartman K."/>
            <person name="Nydick C."/>
            <person name="Carson M.B."/>
            <person name="Vaughn J."/>
            <person name="Thomson C."/>
            <person name="Song L."/>
            <person name="Lin S."/>
            <person name="Yuan X."/>
            <person name="Najar F."/>
            <person name="Zhan M."/>
            <person name="Ren Q."/>
            <person name="Zhu H."/>
            <person name="Qi S."/>
            <person name="Kenton S.M."/>
            <person name="Lai H."/>
            <person name="White J.D."/>
            <person name="Clifton S."/>
            <person name="Roe B.A."/>
            <person name="Dyer D.W."/>
        </authorList>
    </citation>
    <scope>NUCLEOTIDE SEQUENCE [LARGE SCALE GENOMIC DNA]</scope>
    <source>
        <strain>ATCC 700825 / FA 1090</strain>
    </source>
</reference>
<gene>
    <name evidence="1" type="primary">tatB</name>
    <name type="ordered locus">NGO_0182</name>
</gene>
<feature type="chain" id="PRO_0000301195" description="Sec-independent protein translocase protein TatB">
    <location>
        <begin position="1"/>
        <end position="228"/>
    </location>
</feature>
<feature type="transmembrane region" description="Helical" evidence="1">
    <location>
        <begin position="1"/>
        <end position="21"/>
    </location>
</feature>
<feature type="region of interest" description="Disordered" evidence="2">
    <location>
        <begin position="106"/>
        <end position="164"/>
    </location>
</feature>
<feature type="region of interest" description="Disordered" evidence="2">
    <location>
        <begin position="196"/>
        <end position="228"/>
    </location>
</feature>
<feature type="compositionally biased region" description="Basic and acidic residues" evidence="2">
    <location>
        <begin position="135"/>
        <end position="151"/>
    </location>
</feature>
<feature type="compositionally biased region" description="Basic residues" evidence="2">
    <location>
        <begin position="206"/>
        <end position="228"/>
    </location>
</feature>